<organismHost>
    <name type="scientific">Hylaeamys megacephalus</name>
    <name type="common">Large-headed rice rat</name>
    <name type="synonym">Oryzomys megacephalus</name>
    <dbReference type="NCBI Taxonomy" id="89099"/>
</organismHost>
<reference key="1">
    <citation type="journal article" date="2003" name="Virology">
        <title>New insights into the evolutionary relationships between arenaviruses provided by comparative analysis of small and large segment sequences.</title>
        <authorList>
            <person name="Charrel R.N."/>
            <person name="Lemasson J.J."/>
            <person name="Garbutt M."/>
            <person name="Khelifa R."/>
            <person name="De Micco P."/>
            <person name="Feldmann H."/>
            <person name="de Lamballerie X."/>
        </authorList>
    </citation>
    <scope>NUCLEOTIDE SEQUENCE [GENOMIC RNA]</scope>
</reference>
<reference key="2">
    <citation type="submission" date="2004-05" db="EMBL/GenBank/DDBJ databases">
        <title>Complete sequence determination and analysis of the large RNA segment of arenaviruses.</title>
        <authorList>
            <person name="Emonet S."/>
            <person name="de Lamballerie X."/>
            <person name="de Micco P."/>
            <person name="Charrel R.N."/>
        </authorList>
    </citation>
    <scope>NUCLEOTIDE SEQUENCE [GENOMIC RNA]</scope>
</reference>
<name>Z_CPXVB</name>
<sequence length="96" mass="10981">MGNCRSKQESHPICPNTQTPEPTEAEFRRAAVNSLYGRYNCKCCWFADRNLINCSDHYLCLRCLNVMLRTSNLCNICWKPLPTRISVPTEPTAPSE</sequence>
<organism>
    <name type="scientific">Cupixi mammarenavirus (isolate Rat/Brasil/BeAn 119303/1970)</name>
    <name type="common">CPXV</name>
    <dbReference type="NCBI Taxonomy" id="3052304"/>
    <lineage>
        <taxon>Viruses</taxon>
        <taxon>Riboviria</taxon>
        <taxon>Orthornavirae</taxon>
        <taxon>Negarnaviricota</taxon>
        <taxon>Polyploviricotina</taxon>
        <taxon>Ellioviricetes</taxon>
        <taxon>Bunyavirales</taxon>
        <taxon>Arenaviridae</taxon>
        <taxon>Mammarenavirus</taxon>
    </lineage>
</organism>
<dbReference type="EMBL" id="AY216519">
    <property type="protein sequence ID" value="ABY59842.1"/>
    <property type="molecule type" value="Genomic_RNA"/>
</dbReference>
<dbReference type="RefSeq" id="YP_001649219.1">
    <property type="nucleotide sequence ID" value="NC_010252.1"/>
</dbReference>
<dbReference type="KEGG" id="vg:5848387"/>
<dbReference type="OrthoDB" id="23344at10239"/>
<dbReference type="Proteomes" id="UP000008164">
    <property type="component" value="Genome"/>
</dbReference>
<dbReference type="GO" id="GO:0044220">
    <property type="term" value="C:host cell perinuclear region of cytoplasm"/>
    <property type="evidence" value="ECO:0007669"/>
    <property type="project" value="UniProtKB-SubCell"/>
</dbReference>
<dbReference type="GO" id="GO:0020002">
    <property type="term" value="C:host cell plasma membrane"/>
    <property type="evidence" value="ECO:0007669"/>
    <property type="project" value="UniProtKB-SubCell"/>
</dbReference>
<dbReference type="GO" id="GO:0016020">
    <property type="term" value="C:membrane"/>
    <property type="evidence" value="ECO:0007669"/>
    <property type="project" value="UniProtKB-UniRule"/>
</dbReference>
<dbReference type="GO" id="GO:0044423">
    <property type="term" value="C:virion component"/>
    <property type="evidence" value="ECO:0007669"/>
    <property type="project" value="UniProtKB-UniRule"/>
</dbReference>
<dbReference type="GO" id="GO:0003723">
    <property type="term" value="F:RNA binding"/>
    <property type="evidence" value="ECO:0007669"/>
    <property type="project" value="UniProtKB-UniRule"/>
</dbReference>
<dbReference type="GO" id="GO:0008270">
    <property type="term" value="F:zinc ion binding"/>
    <property type="evidence" value="ECO:0007669"/>
    <property type="project" value="UniProtKB-UniRule"/>
</dbReference>
<dbReference type="GO" id="GO:0046761">
    <property type="term" value="P:viral budding from plasma membrane"/>
    <property type="evidence" value="ECO:0007669"/>
    <property type="project" value="UniProtKB-UniRule"/>
</dbReference>
<dbReference type="GO" id="GO:0039702">
    <property type="term" value="P:viral budding via host ESCRT complex"/>
    <property type="evidence" value="ECO:0007669"/>
    <property type="project" value="UniProtKB-UniRule"/>
</dbReference>
<dbReference type="Gene3D" id="3.30.160.310">
    <property type="match status" value="1"/>
</dbReference>
<dbReference type="HAMAP" id="MF_04087">
    <property type="entry name" value="ARENA_Z"/>
    <property type="match status" value="1"/>
</dbReference>
<dbReference type="InterPro" id="IPR024183">
    <property type="entry name" value="RING_finger_Z_arenaviridae"/>
</dbReference>
<dbReference type="InterPro" id="IPR038485">
    <property type="entry name" value="Z_RING-type_Znf_sf"/>
</dbReference>
<dbReference type="InterPro" id="IPR003224">
    <property type="entry name" value="Z_RING_Znf"/>
</dbReference>
<dbReference type="Pfam" id="PF03854">
    <property type="entry name" value="zf-P11"/>
    <property type="match status" value="1"/>
</dbReference>
<dbReference type="PIRSF" id="PIRSF004030">
    <property type="entry name" value="Z_ArenaV"/>
    <property type="match status" value="1"/>
</dbReference>
<keyword id="KW-1032">Host cell membrane</keyword>
<keyword id="KW-1035">Host cytoplasm</keyword>
<keyword id="KW-1043">Host membrane</keyword>
<keyword id="KW-0945">Host-virus interaction</keyword>
<keyword id="KW-0449">Lipoprotein</keyword>
<keyword id="KW-0472">Membrane</keyword>
<keyword id="KW-0479">Metal-binding</keyword>
<keyword id="KW-0519">Myristate</keyword>
<keyword id="KW-1185">Reference proteome</keyword>
<keyword id="KW-1198">Viral budding</keyword>
<keyword id="KW-1187">Viral budding via the host ESCRT complexes</keyword>
<keyword id="KW-1188">Viral release from host cell</keyword>
<keyword id="KW-0946">Virion</keyword>
<keyword id="KW-0862">Zinc</keyword>
<keyword id="KW-0863">Zinc-finger</keyword>
<proteinExistence type="inferred from homology"/>
<protein>
    <recommendedName>
        <fullName evidence="2">RING finger protein Z</fullName>
        <shortName evidence="2">Protein Z</shortName>
    </recommendedName>
    <alternativeName>
        <fullName evidence="2">Zinc-binding protein</fullName>
    </alternativeName>
</protein>
<evidence type="ECO:0000250" key="1">
    <source>
        <dbReference type="UniProtKB" id="P18541"/>
    </source>
</evidence>
<evidence type="ECO:0000255" key="2">
    <source>
        <dbReference type="HAMAP-Rule" id="MF_04087"/>
    </source>
</evidence>
<evidence type="ECO:0000256" key="3">
    <source>
        <dbReference type="SAM" id="MobiDB-lite"/>
    </source>
</evidence>
<accession>B0BLK9</accession>
<feature type="initiator methionine" description="Removed; by host" evidence="2">
    <location>
        <position position="1"/>
    </location>
</feature>
<feature type="chain" id="PRO_0000361030" description="RING finger protein Z" evidence="2">
    <location>
        <begin position="2"/>
        <end position="96"/>
    </location>
</feature>
<feature type="zinc finger region" description="RING-type; atypical" evidence="2">
    <location>
        <begin position="41"/>
        <end position="77"/>
    </location>
</feature>
<feature type="region of interest" description="Disordered" evidence="3">
    <location>
        <begin position="1"/>
        <end position="21"/>
    </location>
</feature>
<feature type="short sequence motif" description="PTAP/PSAP motif" evidence="2">
    <location>
        <begin position="91"/>
        <end position="94"/>
    </location>
</feature>
<feature type="compositionally biased region" description="Basic and acidic residues" evidence="3">
    <location>
        <begin position="1"/>
        <end position="10"/>
    </location>
</feature>
<feature type="lipid moiety-binding region" description="N-myristoyl glycine; by host" evidence="2">
    <location>
        <position position="2"/>
    </location>
</feature>
<gene>
    <name evidence="2" type="primary">Z</name>
</gene>
<comment type="function">
    <text evidence="1 2">Plays a crucial role in virion assembly and budding. Expressed late in the virus life cycle, it acts as an inhibitor of viral transcription and RNA synthesis by interacting with the viral polymerase L. Presumably recruits the NP encapsidated genome to cellular membranes at budding sites via direct interaction with NP. Plays critical roles in the final steps of viral release by interacting with host TSG101, a member of the vacuolar protein-sorting pathway and using other cellular host proteins involved in vesicle formation pathway. The budding of the virus progeny occurs after association of protein Z with the viral glycoprotein complex SSP-GP1-GP2 at the cell periphery, step that requires myristoylation of protein Z. Also selectively represses protein production by associating with host eIF4E (By similarity). In cell-based minigenome assay, has an inhibitory effect on the ribonucleoprotein machinery (vRNP), which is responsible for the replication and transcription of the viral genome (By similarity).</text>
</comment>
<comment type="subunit">
    <text evidence="2">Interacts with protein NP; this interaction probably directs the encapsidated genome to budding sites. Interacts (via RING domain) with polymerase L; this interaction inhibits viral transcription and replication, Z partially blocks the product exit tunnel for the releasing nascent RNA product. Interacts with the glycoprotein complex; this interaction plays a role in virion budding. Interacts with host eIF4E; this interaction results in eIF4E reduced affinity for its substrate, the 5'-m7 G cap structure. Interacts (via late-budding domain) with host TSG101; this interaction is essential for budding and release of viral particles. Interacts with host RPLP0; this interaction may serve to load ribosome-like particles inside the virion. Interacts with host PML; this interaction induces PML bodies redistribution in the cytoplasm upon viral infection.</text>
</comment>
<comment type="subcellular location">
    <subcellularLocation>
        <location evidence="2">Virion</location>
    </subcellularLocation>
    <subcellularLocation>
        <location evidence="2">Host cytoplasm</location>
        <location evidence="2">Host perinuclear region</location>
    </subcellularLocation>
    <subcellularLocation>
        <location evidence="2">Host cell membrane</location>
        <topology evidence="2">Lipid-anchor</topology>
        <orientation evidence="2">Cytoplasmic side</orientation>
    </subcellularLocation>
    <text evidence="2">Mainly perinuclear. During budding, associates at the inner side of the plasma membrane of infected cells.</text>
</comment>
<comment type="domain">
    <text evidence="2">Late-budding domains (L domains) are short sequence motifs essential for viral particle budding. They recruit proteins of the host ESCRT machinery (Endosomal Sorting Complex Required for Transport) or ESCRT-associated proteins.</text>
</comment>
<comment type="PTM">
    <text evidence="1">Myristoylation is required for the role of RING finger protein Z in assembly and budding.</text>
</comment>
<comment type="similarity">
    <text>Belongs to the arenaviridae Z protein family.</text>
</comment>